<proteinExistence type="inferred from homology"/>
<gene>
    <name evidence="1" type="primary">mecA</name>
    <name type="ordered locus">SA0857</name>
</gene>
<name>MECA_STAAN</name>
<dbReference type="EMBL" id="BA000018">
    <property type="protein sequence ID" value="BAB42098.1"/>
    <property type="molecule type" value="Genomic_DNA"/>
</dbReference>
<dbReference type="PIR" id="G89867">
    <property type="entry name" value="G89867"/>
</dbReference>
<dbReference type="RefSeq" id="WP_001217728.1">
    <property type="nucleotide sequence ID" value="NC_002745.2"/>
</dbReference>
<dbReference type="SMR" id="P60185"/>
<dbReference type="EnsemblBacteria" id="BAB42098">
    <property type="protein sequence ID" value="BAB42098"/>
    <property type="gene ID" value="BAB42098"/>
</dbReference>
<dbReference type="GeneID" id="98345315"/>
<dbReference type="KEGG" id="sau:SA0857"/>
<dbReference type="HOGENOM" id="CLU_071496_2_1_9"/>
<dbReference type="GO" id="GO:0030674">
    <property type="term" value="F:protein-macromolecule adaptor activity"/>
    <property type="evidence" value="ECO:0007669"/>
    <property type="project" value="UniProtKB-UniRule"/>
</dbReference>
<dbReference type="Gene3D" id="3.30.70.1950">
    <property type="match status" value="1"/>
</dbReference>
<dbReference type="HAMAP" id="MF_01124">
    <property type="entry name" value="MecA"/>
    <property type="match status" value="1"/>
</dbReference>
<dbReference type="InterPro" id="IPR038471">
    <property type="entry name" value="MecA_C_sf"/>
</dbReference>
<dbReference type="InterPro" id="IPR008681">
    <property type="entry name" value="Neg-reg_MecA"/>
</dbReference>
<dbReference type="NCBIfam" id="NF002642">
    <property type="entry name" value="PRK02315.1-3"/>
    <property type="match status" value="1"/>
</dbReference>
<dbReference type="NCBIfam" id="NF002644">
    <property type="entry name" value="PRK02315.1-5"/>
    <property type="match status" value="1"/>
</dbReference>
<dbReference type="PANTHER" id="PTHR39161">
    <property type="entry name" value="ADAPTER PROTEIN MECA"/>
    <property type="match status" value="1"/>
</dbReference>
<dbReference type="PANTHER" id="PTHR39161:SF1">
    <property type="entry name" value="ADAPTER PROTEIN MECA 1"/>
    <property type="match status" value="1"/>
</dbReference>
<dbReference type="Pfam" id="PF05389">
    <property type="entry name" value="MecA"/>
    <property type="match status" value="1"/>
</dbReference>
<dbReference type="PIRSF" id="PIRSF029008">
    <property type="entry name" value="MecA"/>
    <property type="match status" value="1"/>
</dbReference>
<protein>
    <recommendedName>
        <fullName evidence="1">Adapter protein MecA</fullName>
    </recommendedName>
</protein>
<evidence type="ECO:0000255" key="1">
    <source>
        <dbReference type="HAMAP-Rule" id="MF_01124"/>
    </source>
</evidence>
<evidence type="ECO:0000256" key="2">
    <source>
        <dbReference type="SAM" id="MobiDB-lite"/>
    </source>
</evidence>
<evidence type="ECO:0000305" key="3"/>
<organism>
    <name type="scientific">Staphylococcus aureus (strain N315)</name>
    <dbReference type="NCBI Taxonomy" id="158879"/>
    <lineage>
        <taxon>Bacteria</taxon>
        <taxon>Bacillati</taxon>
        <taxon>Bacillota</taxon>
        <taxon>Bacilli</taxon>
        <taxon>Bacillales</taxon>
        <taxon>Staphylococcaceae</taxon>
        <taxon>Staphylococcus</taxon>
    </lineage>
</organism>
<reference key="1">
    <citation type="journal article" date="2001" name="Lancet">
        <title>Whole genome sequencing of meticillin-resistant Staphylococcus aureus.</title>
        <authorList>
            <person name="Kuroda M."/>
            <person name="Ohta T."/>
            <person name="Uchiyama I."/>
            <person name="Baba T."/>
            <person name="Yuzawa H."/>
            <person name="Kobayashi I."/>
            <person name="Cui L."/>
            <person name="Oguchi A."/>
            <person name="Aoki K."/>
            <person name="Nagai Y."/>
            <person name="Lian J.-Q."/>
            <person name="Ito T."/>
            <person name="Kanamori M."/>
            <person name="Matsumaru H."/>
            <person name="Maruyama A."/>
            <person name="Murakami H."/>
            <person name="Hosoyama A."/>
            <person name="Mizutani-Ui Y."/>
            <person name="Takahashi N.K."/>
            <person name="Sawano T."/>
            <person name="Inoue R."/>
            <person name="Kaito C."/>
            <person name="Sekimizu K."/>
            <person name="Hirakawa H."/>
            <person name="Kuhara S."/>
            <person name="Goto S."/>
            <person name="Yabuzaki J."/>
            <person name="Kanehisa M."/>
            <person name="Yamashita A."/>
            <person name="Oshima K."/>
            <person name="Furuya K."/>
            <person name="Yoshino C."/>
            <person name="Shiba T."/>
            <person name="Hattori M."/>
            <person name="Ogasawara N."/>
            <person name="Hayashi H."/>
            <person name="Hiramatsu K."/>
        </authorList>
    </citation>
    <scope>NUCLEOTIDE SEQUENCE [LARGE SCALE GENOMIC DNA]</scope>
    <source>
        <strain>N315</strain>
    </source>
</reference>
<accession>P60185</accession>
<accession>Q99V92</accession>
<sequence>MRIERVDDTTVKLFITYSDIEARGFSREDLWTNRKRGEEFFWSMMDEINEEEDFVVEGPLWIQVHAFEKGVEVTISKSKNEDMMNMSDDDATDQFDEQVQELLAQTLEGEDQLEELFEQRTKEKEAQGSKRQKSSARKNTRTIIVKFNDLEDVINYAYHSNPITTEFEDLLYMVDGTYYYAVHFDSHVDQEVINDSYSQLLEFAYPTDRTEVYLNDYAKIIMSHNVTAQVRRYFPETTE</sequence>
<comment type="function">
    <text evidence="1">Enables the recognition and targeting of unfolded and aggregated proteins to the ClpC protease or to other proteins involved in proteolysis.</text>
</comment>
<comment type="subunit">
    <text evidence="1">Homodimer.</text>
</comment>
<comment type="domain">
    <text>The N-terminal domain probably binds unfolded/aggregated proteins; the C-terminal domain interacts with ClpC.</text>
</comment>
<comment type="similarity">
    <text evidence="1">Belongs to the MecA family.</text>
</comment>
<comment type="caution">
    <text evidence="3">This protein is unrelated to the penicillin-binding protein Pbp2a, also called MecA, that confers resistance to methicillin in several strains of S.aureus (MRSA) and is used as a marker for the identification of MRSA isolates.</text>
</comment>
<feature type="chain" id="PRO_0000212278" description="Adapter protein MecA">
    <location>
        <begin position="1"/>
        <end position="239"/>
    </location>
</feature>
<feature type="region of interest" description="Disordered" evidence="2">
    <location>
        <begin position="118"/>
        <end position="137"/>
    </location>
</feature>
<feature type="compositionally biased region" description="Basic and acidic residues" evidence="2">
    <location>
        <begin position="118"/>
        <end position="128"/>
    </location>
</feature>